<gene>
    <name type="ordered locus">bll3764</name>
</gene>
<sequence length="426" mass="48097">MLRLDSSDDKQHLVIRSAGGRGKAAEYSFGIEEEYFLADRRSLDVAIQTPNELFESANWSTGGQAMREMLQSQLEVATNVHVDVNDAREELRFLRREVANVAAQYGFVIMACGTHPTAVWRMSQPSPKPRYEEMIEDLRSIGHRNMMCGMHVHVQLPDPEKRMAVMRAMLPHLPLFIALSASSPFWNSHKTGLKGYRLAAYSELPRTGLPELFESRHDYDEYVGALQRSGVIPDESHIWWAMRPSMKHPTLELRAPDTCTFVDDAVAIASLYRCLTRHLYRRPHLSKTVTVVERAIAVENKWRAQRYGTDCIFASKDGPITISELLSRLIDDIVEDADALNCAAEVEHCRTIVERGSSAEFQLRAYRENGNDIAAVSRWIAASTISGRALRSDAPRLRRHSARASFGNDNGIPEFAVSRAVSWRKA</sequence>
<feature type="chain" id="PRO_0000218188" description="Putative glutamate--cysteine ligase 2">
    <location>
        <begin position="1"/>
        <end position="426"/>
    </location>
</feature>
<name>GCS2_BRADU</name>
<reference key="1">
    <citation type="journal article" date="2002" name="DNA Res.">
        <title>Complete genomic sequence of nitrogen-fixing symbiotic bacterium Bradyrhizobium japonicum USDA110.</title>
        <authorList>
            <person name="Kaneko T."/>
            <person name="Nakamura Y."/>
            <person name="Sato S."/>
            <person name="Minamisawa K."/>
            <person name="Uchiumi T."/>
            <person name="Sasamoto S."/>
            <person name="Watanabe A."/>
            <person name="Idesawa K."/>
            <person name="Iriguchi M."/>
            <person name="Kawashima K."/>
            <person name="Kohara M."/>
            <person name="Matsumoto M."/>
            <person name="Shimpo S."/>
            <person name="Tsuruoka H."/>
            <person name="Wada T."/>
            <person name="Yamada M."/>
            <person name="Tabata S."/>
        </authorList>
    </citation>
    <scope>NUCLEOTIDE SEQUENCE [LARGE SCALE GENOMIC DNA]</scope>
    <source>
        <strain>JCM 10833 / BCRC 13528 / IAM 13628 / NBRC 14792 / USDA 110</strain>
    </source>
</reference>
<protein>
    <recommendedName>
        <fullName evidence="1">Putative glutamate--cysteine ligase 2</fullName>
        <ecNumber evidence="1">6.3.2.2</ecNumber>
    </recommendedName>
    <alternativeName>
        <fullName evidence="1">Gamma-glutamylcysteine synthetase 2</fullName>
        <shortName evidence="1">GCS 2</shortName>
        <shortName evidence="1">Gamma-GCS 2</shortName>
    </alternativeName>
</protein>
<dbReference type="EC" id="6.3.2.2" evidence="1"/>
<dbReference type="EMBL" id="BA000040">
    <property type="protein sequence ID" value="BAC49029.1"/>
    <property type="status" value="ALT_INIT"/>
    <property type="molecule type" value="Genomic_DNA"/>
</dbReference>
<dbReference type="RefSeq" id="NP_770404.1">
    <property type="nucleotide sequence ID" value="NC_004463.1"/>
</dbReference>
<dbReference type="SMR" id="Q89NS0"/>
<dbReference type="FunCoup" id="Q89NS0">
    <property type="interactions" value="116"/>
</dbReference>
<dbReference type="STRING" id="224911.AAV28_15800"/>
<dbReference type="EnsemblBacteria" id="BAC49029">
    <property type="protein sequence ID" value="BAC49029"/>
    <property type="gene ID" value="BAC49029"/>
</dbReference>
<dbReference type="KEGG" id="bja:bll3764"/>
<dbReference type="PATRIC" id="fig|224911.5.peg.3753"/>
<dbReference type="eggNOG" id="COG2170">
    <property type="taxonomic scope" value="Bacteria"/>
</dbReference>
<dbReference type="HOGENOM" id="CLU_044848_1_0_5"/>
<dbReference type="InParanoid" id="Q89NS0"/>
<dbReference type="OrthoDB" id="9769628at2"/>
<dbReference type="Proteomes" id="UP000002526">
    <property type="component" value="Chromosome"/>
</dbReference>
<dbReference type="GO" id="GO:0005524">
    <property type="term" value="F:ATP binding"/>
    <property type="evidence" value="ECO:0007669"/>
    <property type="project" value="UniProtKB-KW"/>
</dbReference>
<dbReference type="GO" id="GO:0004357">
    <property type="term" value="F:glutamate-cysteine ligase activity"/>
    <property type="evidence" value="ECO:0007669"/>
    <property type="project" value="UniProtKB-EC"/>
</dbReference>
<dbReference type="GO" id="GO:0016879">
    <property type="term" value="F:ligase activity, forming carbon-nitrogen bonds"/>
    <property type="evidence" value="ECO:0000318"/>
    <property type="project" value="GO_Central"/>
</dbReference>
<dbReference type="GO" id="GO:0042398">
    <property type="term" value="P:modified amino acid biosynthetic process"/>
    <property type="evidence" value="ECO:0007669"/>
    <property type="project" value="InterPro"/>
</dbReference>
<dbReference type="FunFam" id="3.30.590.20:FF:000009">
    <property type="entry name" value="Putative glutamate--cysteine ligase 2"/>
    <property type="match status" value="1"/>
</dbReference>
<dbReference type="Gene3D" id="3.30.590.20">
    <property type="match status" value="1"/>
</dbReference>
<dbReference type="HAMAP" id="MF_01609">
    <property type="entry name" value="Glu_cys_ligase_2"/>
    <property type="match status" value="1"/>
</dbReference>
<dbReference type="InterPro" id="IPR050141">
    <property type="entry name" value="GCL_type2/YbdK_subfam"/>
</dbReference>
<dbReference type="InterPro" id="IPR006336">
    <property type="entry name" value="GCS2"/>
</dbReference>
<dbReference type="InterPro" id="IPR014746">
    <property type="entry name" value="Gln_synth/guanido_kin_cat_dom"/>
</dbReference>
<dbReference type="InterPro" id="IPR011793">
    <property type="entry name" value="YbdK"/>
</dbReference>
<dbReference type="NCBIfam" id="TIGR02050">
    <property type="entry name" value="gshA_cyan_rel"/>
    <property type="match status" value="1"/>
</dbReference>
<dbReference type="NCBIfam" id="NF010039">
    <property type="entry name" value="PRK13515.1"/>
    <property type="match status" value="1"/>
</dbReference>
<dbReference type="PANTHER" id="PTHR36510">
    <property type="entry name" value="GLUTAMATE--CYSTEINE LIGASE 2-RELATED"/>
    <property type="match status" value="1"/>
</dbReference>
<dbReference type="PANTHER" id="PTHR36510:SF1">
    <property type="entry name" value="GLUTAMATE--CYSTEINE LIGASE 2-RELATED"/>
    <property type="match status" value="1"/>
</dbReference>
<dbReference type="Pfam" id="PF04107">
    <property type="entry name" value="GCS2"/>
    <property type="match status" value="1"/>
</dbReference>
<dbReference type="SUPFAM" id="SSF55931">
    <property type="entry name" value="Glutamine synthetase/guanido kinase"/>
    <property type="match status" value="1"/>
</dbReference>
<proteinExistence type="inferred from homology"/>
<keyword id="KW-0067">ATP-binding</keyword>
<keyword id="KW-0436">Ligase</keyword>
<keyword id="KW-0547">Nucleotide-binding</keyword>
<keyword id="KW-1185">Reference proteome</keyword>
<evidence type="ECO:0000255" key="1">
    <source>
        <dbReference type="HAMAP-Rule" id="MF_01609"/>
    </source>
</evidence>
<evidence type="ECO:0000305" key="2"/>
<accession>Q89NS0</accession>
<comment type="function">
    <text evidence="1">ATP-dependent carboxylate-amine ligase which exhibits weak glutamate--cysteine ligase activity.</text>
</comment>
<comment type="catalytic activity">
    <reaction evidence="1">
        <text>L-cysteine + L-glutamate + ATP = gamma-L-glutamyl-L-cysteine + ADP + phosphate + H(+)</text>
        <dbReference type="Rhea" id="RHEA:13285"/>
        <dbReference type="ChEBI" id="CHEBI:15378"/>
        <dbReference type="ChEBI" id="CHEBI:29985"/>
        <dbReference type="ChEBI" id="CHEBI:30616"/>
        <dbReference type="ChEBI" id="CHEBI:35235"/>
        <dbReference type="ChEBI" id="CHEBI:43474"/>
        <dbReference type="ChEBI" id="CHEBI:58173"/>
        <dbReference type="ChEBI" id="CHEBI:456216"/>
        <dbReference type="EC" id="6.3.2.2"/>
    </reaction>
</comment>
<comment type="similarity">
    <text evidence="1">Belongs to the glutamate--cysteine ligase type 2 family. YbdK subfamily.</text>
</comment>
<comment type="sequence caution" evidence="2">
    <conflict type="erroneous initiation">
        <sequence resource="EMBL-CDS" id="BAC49029"/>
    </conflict>
</comment>
<organism>
    <name type="scientific">Bradyrhizobium diazoefficiens (strain JCM 10833 / BCRC 13528 / IAM 13628 / NBRC 14792 / USDA 110)</name>
    <dbReference type="NCBI Taxonomy" id="224911"/>
    <lineage>
        <taxon>Bacteria</taxon>
        <taxon>Pseudomonadati</taxon>
        <taxon>Pseudomonadota</taxon>
        <taxon>Alphaproteobacteria</taxon>
        <taxon>Hyphomicrobiales</taxon>
        <taxon>Nitrobacteraceae</taxon>
        <taxon>Bradyrhizobium</taxon>
    </lineage>
</organism>